<evidence type="ECO:0000255" key="1">
    <source>
        <dbReference type="HAMAP-Rule" id="MF_00221"/>
    </source>
</evidence>
<keyword id="KW-1003">Cell membrane</keyword>
<keyword id="KW-0406">Ion transport</keyword>
<keyword id="KW-0472">Membrane</keyword>
<keyword id="KW-0769">Symport</keyword>
<keyword id="KW-0812">Transmembrane</keyword>
<keyword id="KW-1133">Transmembrane helix</keyword>
<keyword id="KW-0813">Transport</keyword>
<accession>A6U0S3</accession>
<organism>
    <name type="scientific">Staphylococcus aureus (strain JH1)</name>
    <dbReference type="NCBI Taxonomy" id="359787"/>
    <lineage>
        <taxon>Bacteria</taxon>
        <taxon>Bacillati</taxon>
        <taxon>Bacillota</taxon>
        <taxon>Bacilli</taxon>
        <taxon>Bacillales</taxon>
        <taxon>Staphylococcaceae</taxon>
        <taxon>Staphylococcus</taxon>
    </lineage>
</organism>
<proteinExistence type="inferred from homology"/>
<name>MNTH_STAA2</name>
<dbReference type="EMBL" id="CP000736">
    <property type="protein sequence ID" value="ABR52041.1"/>
    <property type="molecule type" value="Genomic_DNA"/>
</dbReference>
<dbReference type="SMR" id="A6U0S3"/>
<dbReference type="KEGG" id="sah:SaurJH1_1187"/>
<dbReference type="HOGENOM" id="CLU_020088_2_0_9"/>
<dbReference type="GO" id="GO:0005886">
    <property type="term" value="C:plasma membrane"/>
    <property type="evidence" value="ECO:0007669"/>
    <property type="project" value="UniProtKB-SubCell"/>
</dbReference>
<dbReference type="GO" id="GO:0015086">
    <property type="term" value="F:cadmium ion transmembrane transporter activity"/>
    <property type="evidence" value="ECO:0007669"/>
    <property type="project" value="TreeGrafter"/>
</dbReference>
<dbReference type="GO" id="GO:0005384">
    <property type="term" value="F:manganese ion transmembrane transporter activity"/>
    <property type="evidence" value="ECO:0007669"/>
    <property type="project" value="TreeGrafter"/>
</dbReference>
<dbReference type="GO" id="GO:0046872">
    <property type="term" value="F:metal ion binding"/>
    <property type="evidence" value="ECO:0007669"/>
    <property type="project" value="UniProtKB-UniRule"/>
</dbReference>
<dbReference type="GO" id="GO:0015293">
    <property type="term" value="F:symporter activity"/>
    <property type="evidence" value="ECO:0007669"/>
    <property type="project" value="UniProtKB-UniRule"/>
</dbReference>
<dbReference type="GO" id="GO:0034755">
    <property type="term" value="P:iron ion transmembrane transport"/>
    <property type="evidence" value="ECO:0007669"/>
    <property type="project" value="TreeGrafter"/>
</dbReference>
<dbReference type="HAMAP" id="MF_00221">
    <property type="entry name" value="NRAMP"/>
    <property type="match status" value="1"/>
</dbReference>
<dbReference type="InterPro" id="IPR001046">
    <property type="entry name" value="NRAMP_fam"/>
</dbReference>
<dbReference type="NCBIfam" id="TIGR01197">
    <property type="entry name" value="nramp"/>
    <property type="match status" value="1"/>
</dbReference>
<dbReference type="NCBIfam" id="NF037982">
    <property type="entry name" value="Nramp_1"/>
    <property type="match status" value="1"/>
</dbReference>
<dbReference type="NCBIfam" id="NF001923">
    <property type="entry name" value="PRK00701.1"/>
    <property type="match status" value="1"/>
</dbReference>
<dbReference type="PANTHER" id="PTHR11706:SF33">
    <property type="entry name" value="NATURAL RESISTANCE-ASSOCIATED MACROPHAGE PROTEIN 2"/>
    <property type="match status" value="1"/>
</dbReference>
<dbReference type="PANTHER" id="PTHR11706">
    <property type="entry name" value="SOLUTE CARRIER PROTEIN FAMILY 11 MEMBER"/>
    <property type="match status" value="1"/>
</dbReference>
<dbReference type="Pfam" id="PF01566">
    <property type="entry name" value="Nramp"/>
    <property type="match status" value="1"/>
</dbReference>
<dbReference type="PRINTS" id="PR00447">
    <property type="entry name" value="NATRESASSCMP"/>
</dbReference>
<feature type="chain" id="PRO_1000078110" description="Divalent metal cation transporter MntH">
    <location>
        <begin position="1"/>
        <end position="450"/>
    </location>
</feature>
<feature type="transmembrane region" description="Helical" evidence="1">
    <location>
        <begin position="34"/>
        <end position="54"/>
    </location>
</feature>
<feature type="transmembrane region" description="Helical" evidence="1">
    <location>
        <begin position="61"/>
        <end position="81"/>
    </location>
</feature>
<feature type="transmembrane region" description="Helical" evidence="1">
    <location>
        <begin position="108"/>
        <end position="128"/>
    </location>
</feature>
<feature type="transmembrane region" description="Helical" evidence="1">
    <location>
        <begin position="141"/>
        <end position="161"/>
    </location>
</feature>
<feature type="transmembrane region" description="Helical" evidence="1">
    <location>
        <begin position="170"/>
        <end position="190"/>
    </location>
</feature>
<feature type="transmembrane region" description="Helical" evidence="1">
    <location>
        <begin position="212"/>
        <end position="232"/>
    </location>
</feature>
<feature type="transmembrane region" description="Helical" evidence="1">
    <location>
        <begin position="263"/>
        <end position="283"/>
    </location>
</feature>
<feature type="transmembrane region" description="Helical" evidence="1">
    <location>
        <begin position="305"/>
        <end position="325"/>
    </location>
</feature>
<feature type="transmembrane region" description="Helical" evidence="1">
    <location>
        <begin position="361"/>
        <end position="381"/>
    </location>
</feature>
<feature type="transmembrane region" description="Helical" evidence="1">
    <location>
        <begin position="383"/>
        <end position="403"/>
    </location>
</feature>
<feature type="transmembrane region" description="Helical" evidence="1">
    <location>
        <begin position="422"/>
        <end position="442"/>
    </location>
</feature>
<reference key="1">
    <citation type="submission" date="2007-06" db="EMBL/GenBank/DDBJ databases">
        <title>Complete sequence of chromosome of Staphylococcus aureus subsp. aureus JH1.</title>
        <authorList>
            <consortium name="US DOE Joint Genome Institute"/>
            <person name="Copeland A."/>
            <person name="Lucas S."/>
            <person name="Lapidus A."/>
            <person name="Barry K."/>
            <person name="Detter J.C."/>
            <person name="Glavina del Rio T."/>
            <person name="Hammon N."/>
            <person name="Israni S."/>
            <person name="Dalin E."/>
            <person name="Tice H."/>
            <person name="Pitluck S."/>
            <person name="Chain P."/>
            <person name="Malfatti S."/>
            <person name="Shin M."/>
            <person name="Vergez L."/>
            <person name="Schmutz J."/>
            <person name="Larimer F."/>
            <person name="Land M."/>
            <person name="Hauser L."/>
            <person name="Kyrpides N."/>
            <person name="Ivanova N."/>
            <person name="Tomasz A."/>
            <person name="Richardson P."/>
        </authorList>
    </citation>
    <scope>NUCLEOTIDE SEQUENCE [LARGE SCALE GENOMIC DNA]</scope>
    <source>
        <strain>JH1</strain>
    </source>
</reference>
<sequence>MNNKRHSTNEQLSLDEINNTIKFDHRSSNKQKFLSFLGPGLLVAVGYMDPGNWITSMQGGAQYGYTLLFVILISSLSAMLLQSMTVRLGIATGMDLAQMTRHYLSRPIAIIFWIIAELAIIATDIAEVIGSAIALNLLFNIPLIVGALITVLDVFLLLFIMKYGFRKIEAIVGTLIFTVLFIFIFEVYISSPQLNAVLNGFIPHSEIITNNGILYIALGIIGATIMPHNLYLHSSIVQSRTYSRHNNEEKAQAIKFATIDSNIQLSIAFVVNCLLLVLGASLFFNSNADDLGGFYDLYHALKTEPVLGATMGAIMSTLFAVALLASGQNSTITGTLAGQIVMEGFLRLHIPNWLRRLITRSLAVIPVIVCLIIFKGNAAKIEQLLVFSQVFLSIALPFCLIPLQLATSNKDLMGPFYNKTWVNIISWTLIIILSILNVYLIVQTFQELQS</sequence>
<gene>
    <name evidence="1" type="primary">mntH</name>
    <name type="ordered locus">SaurJH1_1187</name>
</gene>
<comment type="function">
    <text evidence="1">H(+)-stimulated, divalent metal cation uptake system.</text>
</comment>
<comment type="subcellular location">
    <subcellularLocation>
        <location evidence="1">Cell membrane</location>
        <topology evidence="1">Multi-pass membrane protein</topology>
    </subcellularLocation>
</comment>
<comment type="similarity">
    <text evidence="1">Belongs to the NRAMP family.</text>
</comment>
<protein>
    <recommendedName>
        <fullName evidence="1">Divalent metal cation transporter MntH</fullName>
    </recommendedName>
</protein>